<name>APT_CITBB</name>
<dbReference type="EC" id="2.4.2.7" evidence="1"/>
<dbReference type="EMBL" id="CP001124">
    <property type="protein sequence ID" value="ACH39688.1"/>
    <property type="molecule type" value="Genomic_DNA"/>
</dbReference>
<dbReference type="RefSeq" id="WP_012531113.1">
    <property type="nucleotide sequence ID" value="NC_011146.1"/>
</dbReference>
<dbReference type="SMR" id="B5EHF2"/>
<dbReference type="STRING" id="404380.Gbem_2682"/>
<dbReference type="KEGG" id="gbm:Gbem_2682"/>
<dbReference type="eggNOG" id="COG0503">
    <property type="taxonomic scope" value="Bacteria"/>
</dbReference>
<dbReference type="HOGENOM" id="CLU_063339_3_0_7"/>
<dbReference type="OrthoDB" id="9803963at2"/>
<dbReference type="UniPathway" id="UPA00588">
    <property type="reaction ID" value="UER00646"/>
</dbReference>
<dbReference type="Proteomes" id="UP000008825">
    <property type="component" value="Chromosome"/>
</dbReference>
<dbReference type="GO" id="GO:0005737">
    <property type="term" value="C:cytoplasm"/>
    <property type="evidence" value="ECO:0007669"/>
    <property type="project" value="UniProtKB-SubCell"/>
</dbReference>
<dbReference type="GO" id="GO:0002055">
    <property type="term" value="F:adenine binding"/>
    <property type="evidence" value="ECO:0007669"/>
    <property type="project" value="TreeGrafter"/>
</dbReference>
<dbReference type="GO" id="GO:0003999">
    <property type="term" value="F:adenine phosphoribosyltransferase activity"/>
    <property type="evidence" value="ECO:0007669"/>
    <property type="project" value="UniProtKB-UniRule"/>
</dbReference>
<dbReference type="GO" id="GO:0016208">
    <property type="term" value="F:AMP binding"/>
    <property type="evidence" value="ECO:0007669"/>
    <property type="project" value="TreeGrafter"/>
</dbReference>
<dbReference type="GO" id="GO:0006168">
    <property type="term" value="P:adenine salvage"/>
    <property type="evidence" value="ECO:0007669"/>
    <property type="project" value="InterPro"/>
</dbReference>
<dbReference type="GO" id="GO:0044209">
    <property type="term" value="P:AMP salvage"/>
    <property type="evidence" value="ECO:0007669"/>
    <property type="project" value="UniProtKB-UniRule"/>
</dbReference>
<dbReference type="GO" id="GO:0006166">
    <property type="term" value="P:purine ribonucleoside salvage"/>
    <property type="evidence" value="ECO:0007669"/>
    <property type="project" value="UniProtKB-KW"/>
</dbReference>
<dbReference type="CDD" id="cd06223">
    <property type="entry name" value="PRTases_typeI"/>
    <property type="match status" value="1"/>
</dbReference>
<dbReference type="FunFam" id="3.40.50.2020:FF:000021">
    <property type="entry name" value="Adenine phosphoribosyltransferase"/>
    <property type="match status" value="1"/>
</dbReference>
<dbReference type="Gene3D" id="3.40.50.2020">
    <property type="match status" value="1"/>
</dbReference>
<dbReference type="HAMAP" id="MF_00004">
    <property type="entry name" value="Aden_phosphoribosyltr"/>
    <property type="match status" value="1"/>
</dbReference>
<dbReference type="InterPro" id="IPR005764">
    <property type="entry name" value="Ade_phspho_trans"/>
</dbReference>
<dbReference type="InterPro" id="IPR000836">
    <property type="entry name" value="PRibTrfase_dom"/>
</dbReference>
<dbReference type="InterPro" id="IPR029057">
    <property type="entry name" value="PRTase-like"/>
</dbReference>
<dbReference type="InterPro" id="IPR050054">
    <property type="entry name" value="UPRTase/APRTase"/>
</dbReference>
<dbReference type="NCBIfam" id="TIGR01090">
    <property type="entry name" value="apt"/>
    <property type="match status" value="1"/>
</dbReference>
<dbReference type="NCBIfam" id="NF002634">
    <property type="entry name" value="PRK02304.1-3"/>
    <property type="match status" value="1"/>
</dbReference>
<dbReference type="NCBIfam" id="NF002636">
    <property type="entry name" value="PRK02304.1-5"/>
    <property type="match status" value="1"/>
</dbReference>
<dbReference type="PANTHER" id="PTHR32315">
    <property type="entry name" value="ADENINE PHOSPHORIBOSYLTRANSFERASE"/>
    <property type="match status" value="1"/>
</dbReference>
<dbReference type="PANTHER" id="PTHR32315:SF3">
    <property type="entry name" value="ADENINE PHOSPHORIBOSYLTRANSFERASE"/>
    <property type="match status" value="1"/>
</dbReference>
<dbReference type="Pfam" id="PF00156">
    <property type="entry name" value="Pribosyltran"/>
    <property type="match status" value="1"/>
</dbReference>
<dbReference type="SUPFAM" id="SSF53271">
    <property type="entry name" value="PRTase-like"/>
    <property type="match status" value="1"/>
</dbReference>
<sequence>MEDLKSIIRNIPDFPKKGILFKDITTLLGDAKSFQRMVDLLSHRYVGQKIDKVVGVEARGFIIGAALAYKLGAGIVLVRKPGKLPSKTRSKTYDLEYGTDTLEIHTDAFNKGDRVLIADDLLATGGTMAAVVDLISSMDVELVECCFMAELEFLEGGKKLPEGKVFSLLKF</sequence>
<reference key="1">
    <citation type="submission" date="2008-07" db="EMBL/GenBank/DDBJ databases">
        <title>Complete sequence of Geobacter bemidjiensis BEM.</title>
        <authorList>
            <consortium name="US DOE Joint Genome Institute"/>
            <person name="Lucas S."/>
            <person name="Copeland A."/>
            <person name="Lapidus A."/>
            <person name="Glavina del Rio T."/>
            <person name="Dalin E."/>
            <person name="Tice H."/>
            <person name="Bruce D."/>
            <person name="Goodwin L."/>
            <person name="Pitluck S."/>
            <person name="Kiss H."/>
            <person name="Brettin T."/>
            <person name="Detter J.C."/>
            <person name="Han C."/>
            <person name="Kuske C.R."/>
            <person name="Schmutz J."/>
            <person name="Larimer F."/>
            <person name="Land M."/>
            <person name="Hauser L."/>
            <person name="Kyrpides N."/>
            <person name="Lykidis A."/>
            <person name="Lovley D."/>
            <person name="Richardson P."/>
        </authorList>
    </citation>
    <scope>NUCLEOTIDE SEQUENCE [LARGE SCALE GENOMIC DNA]</scope>
    <source>
        <strain>ATCC BAA-1014 / DSM 16622 / JCM 12645 / Bem</strain>
    </source>
</reference>
<comment type="function">
    <text evidence="1">Catalyzes a salvage reaction resulting in the formation of AMP, that is energically less costly than de novo synthesis.</text>
</comment>
<comment type="catalytic activity">
    <reaction evidence="1">
        <text>AMP + diphosphate = 5-phospho-alpha-D-ribose 1-diphosphate + adenine</text>
        <dbReference type="Rhea" id="RHEA:16609"/>
        <dbReference type="ChEBI" id="CHEBI:16708"/>
        <dbReference type="ChEBI" id="CHEBI:33019"/>
        <dbReference type="ChEBI" id="CHEBI:58017"/>
        <dbReference type="ChEBI" id="CHEBI:456215"/>
        <dbReference type="EC" id="2.4.2.7"/>
    </reaction>
</comment>
<comment type="pathway">
    <text evidence="1">Purine metabolism; AMP biosynthesis via salvage pathway; AMP from adenine: step 1/1.</text>
</comment>
<comment type="subunit">
    <text evidence="1">Homodimer.</text>
</comment>
<comment type="subcellular location">
    <subcellularLocation>
        <location evidence="1">Cytoplasm</location>
    </subcellularLocation>
</comment>
<comment type="similarity">
    <text evidence="1">Belongs to the purine/pyrimidine phosphoribosyltransferase family.</text>
</comment>
<organism>
    <name type="scientific">Citrifermentans bemidjiense (strain ATCC BAA-1014 / DSM 16622 / JCM 12645 / Bem)</name>
    <name type="common">Geobacter bemidjiensis</name>
    <dbReference type="NCBI Taxonomy" id="404380"/>
    <lineage>
        <taxon>Bacteria</taxon>
        <taxon>Pseudomonadati</taxon>
        <taxon>Thermodesulfobacteriota</taxon>
        <taxon>Desulfuromonadia</taxon>
        <taxon>Geobacterales</taxon>
        <taxon>Geobacteraceae</taxon>
        <taxon>Citrifermentans</taxon>
    </lineage>
</organism>
<accession>B5EHF2</accession>
<protein>
    <recommendedName>
        <fullName evidence="1">Adenine phosphoribosyltransferase</fullName>
        <shortName evidence="1">APRT</shortName>
        <ecNumber evidence="1">2.4.2.7</ecNumber>
    </recommendedName>
</protein>
<proteinExistence type="inferred from homology"/>
<gene>
    <name evidence="1" type="primary">apt</name>
    <name type="ordered locus">Gbem_2682</name>
</gene>
<evidence type="ECO:0000255" key="1">
    <source>
        <dbReference type="HAMAP-Rule" id="MF_00004"/>
    </source>
</evidence>
<keyword id="KW-0963">Cytoplasm</keyword>
<keyword id="KW-0328">Glycosyltransferase</keyword>
<keyword id="KW-0660">Purine salvage</keyword>
<keyword id="KW-1185">Reference proteome</keyword>
<keyword id="KW-0808">Transferase</keyword>
<feature type="chain" id="PRO_1000088976" description="Adenine phosphoribosyltransferase">
    <location>
        <begin position="1"/>
        <end position="171"/>
    </location>
</feature>